<sequence>MRELTKRQSEIYNYIKQVVQTKGYPPSVREIGEAVGLASSSTVHGHLSRLEEKGYIRRDPTKPRAIEIVSDQTNDNINMEETIHVPVIGKVTAGVPITAVENIEEYFPLPEHLTSTHNSDIFILNVVGDSMIEAGILDGDKVIVRSQTIAENGDIIVAMTEEDEATVKRFYKEKNRYRLQPENSTMEPIYLDNVAVIGKVIGLYREM</sequence>
<evidence type="ECO:0000255" key="1">
    <source>
        <dbReference type="HAMAP-Rule" id="MF_00015"/>
    </source>
</evidence>
<feature type="chain" id="PRO_0000322764" description="LexA repressor">
    <location>
        <begin position="1"/>
        <end position="207"/>
    </location>
</feature>
<feature type="DNA-binding region" description="H-T-H motif" evidence="1">
    <location>
        <begin position="28"/>
        <end position="48"/>
    </location>
</feature>
<feature type="active site" description="For autocatalytic cleavage activity" evidence="1">
    <location>
        <position position="130"/>
    </location>
</feature>
<feature type="active site" description="For autocatalytic cleavage activity" evidence="1">
    <location>
        <position position="168"/>
    </location>
</feature>
<feature type="site" description="Cleavage; by autolysis" evidence="1">
    <location>
        <begin position="93"/>
        <end position="94"/>
    </location>
</feature>
<name>LEXA_STAA3</name>
<reference key="1">
    <citation type="journal article" date="2006" name="Lancet">
        <title>Complete genome sequence of USA300, an epidemic clone of community-acquired meticillin-resistant Staphylococcus aureus.</title>
        <authorList>
            <person name="Diep B.A."/>
            <person name="Gill S.R."/>
            <person name="Chang R.F."/>
            <person name="Phan T.H."/>
            <person name="Chen J.H."/>
            <person name="Davidson M.G."/>
            <person name="Lin F."/>
            <person name="Lin J."/>
            <person name="Carleton H.A."/>
            <person name="Mongodin E.F."/>
            <person name="Sensabaugh G.F."/>
            <person name="Perdreau-Remington F."/>
        </authorList>
    </citation>
    <scope>NUCLEOTIDE SEQUENCE [LARGE SCALE GENOMIC DNA]</scope>
    <source>
        <strain>USA300</strain>
    </source>
</reference>
<accession>Q2FH94</accession>
<keyword id="KW-0068">Autocatalytic cleavage</keyword>
<keyword id="KW-0227">DNA damage</keyword>
<keyword id="KW-0234">DNA repair</keyword>
<keyword id="KW-0235">DNA replication</keyword>
<keyword id="KW-0238">DNA-binding</keyword>
<keyword id="KW-0378">Hydrolase</keyword>
<keyword id="KW-0678">Repressor</keyword>
<keyword id="KW-0742">SOS response</keyword>
<keyword id="KW-0804">Transcription</keyword>
<keyword id="KW-0805">Transcription regulation</keyword>
<dbReference type="EC" id="3.4.21.88" evidence="1"/>
<dbReference type="EMBL" id="CP000255">
    <property type="protein sequence ID" value="ABD22255.1"/>
    <property type="molecule type" value="Genomic_DNA"/>
</dbReference>
<dbReference type="RefSeq" id="WP_001208760.1">
    <property type="nucleotide sequence ID" value="NZ_CP027476.1"/>
</dbReference>
<dbReference type="SMR" id="Q2FH94"/>
<dbReference type="MEROPS" id="S24.001"/>
<dbReference type="KEGG" id="saa:SAUSA300_1237"/>
<dbReference type="HOGENOM" id="CLU_066192_45_1_9"/>
<dbReference type="Proteomes" id="UP000001939">
    <property type="component" value="Chromosome"/>
</dbReference>
<dbReference type="GO" id="GO:0003677">
    <property type="term" value="F:DNA binding"/>
    <property type="evidence" value="ECO:0007669"/>
    <property type="project" value="UniProtKB-UniRule"/>
</dbReference>
<dbReference type="GO" id="GO:0004252">
    <property type="term" value="F:serine-type endopeptidase activity"/>
    <property type="evidence" value="ECO:0007669"/>
    <property type="project" value="UniProtKB-UniRule"/>
</dbReference>
<dbReference type="GO" id="GO:0006281">
    <property type="term" value="P:DNA repair"/>
    <property type="evidence" value="ECO:0007669"/>
    <property type="project" value="UniProtKB-UniRule"/>
</dbReference>
<dbReference type="GO" id="GO:0006260">
    <property type="term" value="P:DNA replication"/>
    <property type="evidence" value="ECO:0007669"/>
    <property type="project" value="UniProtKB-UniRule"/>
</dbReference>
<dbReference type="GO" id="GO:0045892">
    <property type="term" value="P:negative regulation of DNA-templated transcription"/>
    <property type="evidence" value="ECO:0007669"/>
    <property type="project" value="UniProtKB-UniRule"/>
</dbReference>
<dbReference type="GO" id="GO:0006508">
    <property type="term" value="P:proteolysis"/>
    <property type="evidence" value="ECO:0007669"/>
    <property type="project" value="InterPro"/>
</dbReference>
<dbReference type="GO" id="GO:0009432">
    <property type="term" value="P:SOS response"/>
    <property type="evidence" value="ECO:0007669"/>
    <property type="project" value="UniProtKB-UniRule"/>
</dbReference>
<dbReference type="CDD" id="cd00090">
    <property type="entry name" value="HTH_ARSR"/>
    <property type="match status" value="1"/>
</dbReference>
<dbReference type="CDD" id="cd06529">
    <property type="entry name" value="S24_LexA-like"/>
    <property type="match status" value="1"/>
</dbReference>
<dbReference type="FunFam" id="1.10.10.10:FF:000009">
    <property type="entry name" value="LexA repressor"/>
    <property type="match status" value="1"/>
</dbReference>
<dbReference type="FunFam" id="2.10.109.10:FF:000001">
    <property type="entry name" value="LexA repressor"/>
    <property type="match status" value="1"/>
</dbReference>
<dbReference type="Gene3D" id="2.10.109.10">
    <property type="entry name" value="Umud Fragment, subunit A"/>
    <property type="match status" value="1"/>
</dbReference>
<dbReference type="Gene3D" id="1.10.10.10">
    <property type="entry name" value="Winged helix-like DNA-binding domain superfamily/Winged helix DNA-binding domain"/>
    <property type="match status" value="1"/>
</dbReference>
<dbReference type="HAMAP" id="MF_00015">
    <property type="entry name" value="LexA"/>
    <property type="match status" value="1"/>
</dbReference>
<dbReference type="InterPro" id="IPR011991">
    <property type="entry name" value="ArsR-like_HTH"/>
</dbReference>
<dbReference type="InterPro" id="IPR006200">
    <property type="entry name" value="LexA"/>
</dbReference>
<dbReference type="InterPro" id="IPR039418">
    <property type="entry name" value="LexA-like"/>
</dbReference>
<dbReference type="InterPro" id="IPR036286">
    <property type="entry name" value="LexA/Signal_pep-like_sf"/>
</dbReference>
<dbReference type="InterPro" id="IPR006199">
    <property type="entry name" value="LexA_DNA-bd_dom"/>
</dbReference>
<dbReference type="InterPro" id="IPR050077">
    <property type="entry name" value="LexA_repressor"/>
</dbReference>
<dbReference type="InterPro" id="IPR006197">
    <property type="entry name" value="Peptidase_S24_LexA"/>
</dbReference>
<dbReference type="InterPro" id="IPR015927">
    <property type="entry name" value="Peptidase_S24_S26A/B/C"/>
</dbReference>
<dbReference type="InterPro" id="IPR036388">
    <property type="entry name" value="WH-like_DNA-bd_sf"/>
</dbReference>
<dbReference type="InterPro" id="IPR036390">
    <property type="entry name" value="WH_DNA-bd_sf"/>
</dbReference>
<dbReference type="NCBIfam" id="TIGR00498">
    <property type="entry name" value="lexA"/>
    <property type="match status" value="1"/>
</dbReference>
<dbReference type="PANTHER" id="PTHR33516">
    <property type="entry name" value="LEXA REPRESSOR"/>
    <property type="match status" value="1"/>
</dbReference>
<dbReference type="PANTHER" id="PTHR33516:SF2">
    <property type="entry name" value="LEXA REPRESSOR-RELATED"/>
    <property type="match status" value="1"/>
</dbReference>
<dbReference type="Pfam" id="PF01726">
    <property type="entry name" value="LexA_DNA_bind"/>
    <property type="match status" value="1"/>
</dbReference>
<dbReference type="Pfam" id="PF00717">
    <property type="entry name" value="Peptidase_S24"/>
    <property type="match status" value="1"/>
</dbReference>
<dbReference type="PRINTS" id="PR00726">
    <property type="entry name" value="LEXASERPTASE"/>
</dbReference>
<dbReference type="SUPFAM" id="SSF51306">
    <property type="entry name" value="LexA/Signal peptidase"/>
    <property type="match status" value="1"/>
</dbReference>
<dbReference type="SUPFAM" id="SSF46785">
    <property type="entry name" value="Winged helix' DNA-binding domain"/>
    <property type="match status" value="1"/>
</dbReference>
<gene>
    <name evidence="1" type="primary">lexA</name>
    <name type="ordered locus">SAUSA300_1237</name>
</gene>
<organism>
    <name type="scientific">Staphylococcus aureus (strain USA300)</name>
    <dbReference type="NCBI Taxonomy" id="367830"/>
    <lineage>
        <taxon>Bacteria</taxon>
        <taxon>Bacillati</taxon>
        <taxon>Bacillota</taxon>
        <taxon>Bacilli</taxon>
        <taxon>Bacillales</taxon>
        <taxon>Staphylococcaceae</taxon>
        <taxon>Staphylococcus</taxon>
    </lineage>
</organism>
<comment type="function">
    <text evidence="1">Represses a number of genes involved in the response to DNA damage (SOS response), including recA and lexA. In the presence of single-stranded DNA, RecA interacts with LexA causing an autocatalytic cleavage which disrupts the DNA-binding part of LexA, leading to derepression of the SOS regulon and eventually DNA repair.</text>
</comment>
<comment type="catalytic activity">
    <reaction evidence="1">
        <text>Hydrolysis of Ala-|-Gly bond in repressor LexA.</text>
        <dbReference type="EC" id="3.4.21.88"/>
    </reaction>
</comment>
<comment type="subunit">
    <text evidence="1">Homodimer.</text>
</comment>
<comment type="similarity">
    <text evidence="1">Belongs to the peptidase S24 family.</text>
</comment>
<protein>
    <recommendedName>
        <fullName evidence="1">LexA repressor</fullName>
        <ecNumber evidence="1">3.4.21.88</ecNumber>
    </recommendedName>
</protein>
<proteinExistence type="inferred from homology"/>